<name>MDAR2_SOYBN</name>
<accession>Q9S926</accession>
<feature type="chain" id="PRO_0000209144" description="Monodehydroascorbate reductase II">
    <location>
        <begin position="1" status="less than"/>
        <end position="10" status="greater than"/>
    </location>
</feature>
<feature type="binding site" evidence="1">
    <location>
        <begin position="5"/>
        <end position="10" status="greater than"/>
    </location>
    <ligand>
        <name>FAD</name>
        <dbReference type="ChEBI" id="CHEBI:57692"/>
    </ligand>
</feature>
<feature type="non-terminal residue" evidence="3">
    <location>
        <position position="1"/>
    </location>
</feature>
<feature type="non-terminal residue" evidence="3">
    <location>
        <position position="10"/>
    </location>
</feature>
<organism>
    <name type="scientific">Glycine max</name>
    <name type="common">Soybean</name>
    <name type="synonym">Glycine hispida</name>
    <dbReference type="NCBI Taxonomy" id="3847"/>
    <lineage>
        <taxon>Eukaryota</taxon>
        <taxon>Viridiplantae</taxon>
        <taxon>Streptophyta</taxon>
        <taxon>Embryophyta</taxon>
        <taxon>Tracheophyta</taxon>
        <taxon>Spermatophyta</taxon>
        <taxon>Magnoliopsida</taxon>
        <taxon>eudicotyledons</taxon>
        <taxon>Gunneridae</taxon>
        <taxon>Pentapetalae</taxon>
        <taxon>rosids</taxon>
        <taxon>fabids</taxon>
        <taxon>Fabales</taxon>
        <taxon>Fabaceae</taxon>
        <taxon>Papilionoideae</taxon>
        <taxon>50 kb inversion clade</taxon>
        <taxon>NPAAA clade</taxon>
        <taxon>indigoferoid/millettioid clade</taxon>
        <taxon>Phaseoleae</taxon>
        <taxon>Glycine</taxon>
        <taxon>Glycine subgen. Soja</taxon>
    </lineage>
</organism>
<reference evidence="4" key="1">
    <citation type="journal article" date="1992" name="Arch. Biochem. Biophys.">
        <title>Purification and characterization of monodehydroascorbate reductase from soybean root nodules.</title>
        <authorList>
            <person name="Dalton D.A."/>
            <person name="Langeberg L."/>
            <person name="Robbins M."/>
        </authorList>
    </citation>
    <scope>PROTEIN SEQUENCE</scope>
    <scope>CATALYTIC ACTIVITY</scope>
    <scope>COFACTOR</scope>
    <source>
        <strain evidence="2">cv. Williams</strain>
        <tissue evidence="2">Root nodule</tissue>
    </source>
</reference>
<comment type="function">
    <text>Catalyzes the conversion of monodehydroascorbate to ascorbate, oxidizing NADH in the process.</text>
</comment>
<comment type="catalytic activity">
    <reaction evidence="2">
        <text>2 monodehydro-L-ascorbate radical + NADH + H(+) = 2 L-ascorbate + NAD(+)</text>
        <dbReference type="Rhea" id="RHEA:14581"/>
        <dbReference type="ChEBI" id="CHEBI:15378"/>
        <dbReference type="ChEBI" id="CHEBI:38290"/>
        <dbReference type="ChEBI" id="CHEBI:57540"/>
        <dbReference type="ChEBI" id="CHEBI:57945"/>
        <dbReference type="ChEBI" id="CHEBI:59513"/>
        <dbReference type="EC" id="1.6.5.4"/>
    </reaction>
</comment>
<comment type="cofactor">
    <cofactor evidence="2">
        <name>FAD</name>
        <dbReference type="ChEBI" id="CHEBI:57692"/>
    </cofactor>
</comment>
<comment type="biophysicochemical properties">
    <kinetics>
        <KM>5.6 uM for NADH</KM>
        <KM>150 uM for NADPH</KM>
        <KM>7 uM for monodehydroascorbate</KM>
        <Vmax>288.0 umol/min/mg enzyme for NADH oxidation reaction</Vmax>
    </kinetics>
    <phDependence>
        <text>Optimum pH is 8.0-9.0.</text>
    </phDependence>
</comment>
<comment type="similarity">
    <text evidence="4">Belongs to the FAD-dependent oxidoreductase family.</text>
</comment>
<evidence type="ECO:0000250" key="1"/>
<evidence type="ECO:0000269" key="2">
    <source>
    </source>
</evidence>
<evidence type="ECO:0000303" key="3">
    <source>
    </source>
</evidence>
<evidence type="ECO:0000305" key="4"/>
<dbReference type="EC" id="1.6.5.4"/>
<dbReference type="PIR" id="A44871">
    <property type="entry name" value="A44871"/>
</dbReference>
<dbReference type="InParanoid" id="Q9S926"/>
<dbReference type="Proteomes" id="UP000008827">
    <property type="component" value="Unplaced"/>
</dbReference>
<dbReference type="GO" id="GO:0016656">
    <property type="term" value="F:monodehydroascorbate reductase (NADH) activity"/>
    <property type="evidence" value="ECO:0007669"/>
    <property type="project" value="UniProtKB-EC"/>
</dbReference>
<sequence>AKTFKYIILG</sequence>
<protein>
    <recommendedName>
        <fullName>Monodehydroascorbate reductase II</fullName>
        <shortName>MDARII</shortName>
        <shortName>MRII</shortName>
        <ecNumber>1.6.5.4</ecNumber>
    </recommendedName>
    <alternativeName>
        <fullName>Ascorbate free radical reductase II</fullName>
        <shortName>AFR reductase II</shortName>
    </alternativeName>
</protein>
<keyword id="KW-0903">Direct protein sequencing</keyword>
<keyword id="KW-0274">FAD</keyword>
<keyword id="KW-0285">Flavoprotein</keyword>
<keyword id="KW-0520">NAD</keyword>
<keyword id="KW-0560">Oxidoreductase</keyword>
<keyword id="KW-0676">Redox-active center</keyword>
<keyword id="KW-1185">Reference proteome</keyword>
<proteinExistence type="evidence at protein level"/>